<reference key="1">
    <citation type="journal article" date="2007" name="Nature">
        <title>Evolution of genes and genomes on the Drosophila phylogeny.</title>
        <authorList>
            <consortium name="Drosophila 12 genomes consortium"/>
        </authorList>
    </citation>
    <scope>NUCLEOTIDE SEQUENCE [LARGE SCALE GENOMIC DNA]</scope>
    <source>
        <strain>Tucson 14024-0371.13</strain>
    </source>
</reference>
<gene>
    <name type="ORF">GF11110</name>
</gene>
<keyword id="KW-0143">Chaperone</keyword>
<keyword id="KW-0496">Mitochondrion</keyword>
<keyword id="KW-1185">Reference proteome</keyword>
<keyword id="KW-0809">Transit peptide</keyword>
<accession>B3MI37</accession>
<proteinExistence type="inferred from homology"/>
<name>SDF2A_DROAN</name>
<feature type="transit peptide" description="Mitochondrion" evidence="1">
    <location>
        <begin position="1"/>
        <end position="24"/>
    </location>
</feature>
<feature type="chain" id="PRO_0000383162" description="Succinate dehydrogenase assembly factor 2-A, mitochondrial">
    <location>
        <begin position="25"/>
        <end position="156"/>
    </location>
</feature>
<feature type="region of interest" description="Disordered" evidence="2">
    <location>
        <begin position="35"/>
        <end position="62"/>
    </location>
</feature>
<protein>
    <recommendedName>
        <fullName evidence="1">Succinate dehydrogenase assembly factor 2-A, mitochondrial</fullName>
        <shortName evidence="1">SDH assembly factor 2-A</shortName>
        <shortName evidence="1">SDHAF2-A</shortName>
    </recommendedName>
</protein>
<comment type="function">
    <text evidence="1">Plays an essential role in the assembly of succinate dehydrogenase (SDH), an enzyme complex (also referred to as respiratory complex II) that is a component of both the tricarboxylic acid (TCA) cycle and the mitochondrial electron transport chain, and which couples the oxidation of succinate to fumarate with the reduction of ubiquinone (coenzyme Q) to ubiquinol. Required for flavinylation (covalent attachment of FAD) of the flavoprotein subunit of the SDH catalytic dimer.</text>
</comment>
<comment type="subunit">
    <text evidence="1">Interacts with the flavoprotein subunit within the SDH catalytic dimer.</text>
</comment>
<comment type="subcellular location">
    <subcellularLocation>
        <location evidence="1">Mitochondrion matrix</location>
    </subcellularLocation>
</comment>
<comment type="similarity">
    <text evidence="1">Belongs to the SDHAF2 family.</text>
</comment>
<dbReference type="EMBL" id="CH902619">
    <property type="protein sequence ID" value="EDV38047.1"/>
    <property type="molecule type" value="Genomic_DNA"/>
</dbReference>
<dbReference type="SMR" id="B3MI37"/>
<dbReference type="FunCoup" id="B3MI37">
    <property type="interactions" value="1278"/>
</dbReference>
<dbReference type="STRING" id="7217.B3MI37"/>
<dbReference type="EnsemblMetazoa" id="FBtr0115810">
    <property type="protein sequence ID" value="FBpp0114302"/>
    <property type="gene ID" value="FBgn0088150"/>
</dbReference>
<dbReference type="EnsemblMetazoa" id="XM_001961189.4">
    <property type="protein sequence ID" value="XP_001961225.1"/>
    <property type="gene ID" value="LOC6493975"/>
</dbReference>
<dbReference type="GeneID" id="6493975"/>
<dbReference type="KEGG" id="dan:6493975"/>
<dbReference type="eggNOG" id="KOG3326">
    <property type="taxonomic scope" value="Eukaryota"/>
</dbReference>
<dbReference type="HOGENOM" id="CLU_103054_0_3_1"/>
<dbReference type="InParanoid" id="B3MI37"/>
<dbReference type="OMA" id="DTEIMRM"/>
<dbReference type="OrthoDB" id="284292at2759"/>
<dbReference type="PhylomeDB" id="B3MI37"/>
<dbReference type="Proteomes" id="UP000007801">
    <property type="component" value="Unassembled WGS sequence"/>
</dbReference>
<dbReference type="GO" id="GO:0005759">
    <property type="term" value="C:mitochondrial matrix"/>
    <property type="evidence" value="ECO:0007669"/>
    <property type="project" value="UniProtKB-SubCell"/>
</dbReference>
<dbReference type="GO" id="GO:0005739">
    <property type="term" value="C:mitochondrion"/>
    <property type="evidence" value="ECO:0000250"/>
    <property type="project" value="UniProtKB"/>
</dbReference>
<dbReference type="GO" id="GO:0006121">
    <property type="term" value="P:mitochondrial electron transport, succinate to ubiquinone"/>
    <property type="evidence" value="ECO:0000250"/>
    <property type="project" value="UniProtKB"/>
</dbReference>
<dbReference type="GO" id="GO:0034553">
    <property type="term" value="P:mitochondrial respiratory chain complex II assembly"/>
    <property type="evidence" value="ECO:0007669"/>
    <property type="project" value="TreeGrafter"/>
</dbReference>
<dbReference type="GO" id="GO:0018293">
    <property type="term" value="P:protein-FAD linkage"/>
    <property type="evidence" value="ECO:0000250"/>
    <property type="project" value="UniProtKB"/>
</dbReference>
<dbReference type="GO" id="GO:0006099">
    <property type="term" value="P:tricarboxylic acid cycle"/>
    <property type="evidence" value="ECO:0007669"/>
    <property type="project" value="TreeGrafter"/>
</dbReference>
<dbReference type="FunFam" id="1.10.150.250:FF:000002">
    <property type="entry name" value="Succinate dehydrogenase assembly factor 2, mitochondrial"/>
    <property type="match status" value="1"/>
</dbReference>
<dbReference type="Gene3D" id="1.10.150.250">
    <property type="entry name" value="Flavinator of succinate dehydrogenase"/>
    <property type="match status" value="1"/>
</dbReference>
<dbReference type="HAMAP" id="MF_03057">
    <property type="entry name" value="SDHAF2"/>
    <property type="match status" value="1"/>
</dbReference>
<dbReference type="InterPro" id="IPR005631">
    <property type="entry name" value="SDH"/>
</dbReference>
<dbReference type="InterPro" id="IPR036714">
    <property type="entry name" value="SDH_sf"/>
</dbReference>
<dbReference type="InterPro" id="IPR028882">
    <property type="entry name" value="SDHAF2"/>
</dbReference>
<dbReference type="PANTHER" id="PTHR12469">
    <property type="entry name" value="PROTEIN EMI5 HOMOLOG, MITOCHONDRIAL"/>
    <property type="match status" value="1"/>
</dbReference>
<dbReference type="PANTHER" id="PTHR12469:SF2">
    <property type="entry name" value="SUCCINATE DEHYDROGENASE ASSEMBLY FACTOR 2, MITOCHONDRIAL"/>
    <property type="match status" value="1"/>
</dbReference>
<dbReference type="Pfam" id="PF03937">
    <property type="entry name" value="Sdh5"/>
    <property type="match status" value="1"/>
</dbReference>
<dbReference type="SUPFAM" id="SSF109910">
    <property type="entry name" value="YgfY-like"/>
    <property type="match status" value="1"/>
</dbReference>
<organism>
    <name type="scientific">Drosophila ananassae</name>
    <name type="common">Fruit fly</name>
    <dbReference type="NCBI Taxonomy" id="7217"/>
    <lineage>
        <taxon>Eukaryota</taxon>
        <taxon>Metazoa</taxon>
        <taxon>Ecdysozoa</taxon>
        <taxon>Arthropoda</taxon>
        <taxon>Hexapoda</taxon>
        <taxon>Insecta</taxon>
        <taxon>Pterygota</taxon>
        <taxon>Neoptera</taxon>
        <taxon>Endopterygota</taxon>
        <taxon>Diptera</taxon>
        <taxon>Brachycera</taxon>
        <taxon>Muscomorpha</taxon>
        <taxon>Ephydroidea</taxon>
        <taxon>Drosophilidae</taxon>
        <taxon>Drosophila</taxon>
        <taxon>Sophophora</taxon>
    </lineage>
</organism>
<evidence type="ECO:0000255" key="1">
    <source>
        <dbReference type="HAMAP-Rule" id="MF_03057"/>
    </source>
</evidence>
<evidence type="ECO:0000256" key="2">
    <source>
        <dbReference type="SAM" id="MobiDB-lite"/>
    </source>
</evidence>
<sequence length="156" mass="18177">MLRQFLVSTAVRRVVVPSMAQTRCASNLDKSEYTTPGEIVDYDDPPHIPVPEYPSRPDEPLETRKQRLLYQSRKRGMLENDLLLSTFVAKYLKSFTADQTAQYDDLINGVSNDWDIFYWATETKPTPPEFDTEIMRLLKEHVKNAEKVQRIRQPDL</sequence>